<accession>P25361</accession>
<accession>D6VR52</accession>
<gene>
    <name type="ordered locus">YCR043C</name>
    <name type="ORF">YCR43C</name>
    <name type="ORF">YCR725</name>
</gene>
<name>YCT3_YEAST</name>
<evidence type="ECO:0000269" key="1">
    <source>
    </source>
</evidence>
<proteinExistence type="evidence at protein level"/>
<keyword id="KW-1185">Reference proteome</keyword>
<organism>
    <name type="scientific">Saccharomyces cerevisiae (strain ATCC 204508 / S288c)</name>
    <name type="common">Baker's yeast</name>
    <dbReference type="NCBI Taxonomy" id="559292"/>
    <lineage>
        <taxon>Eukaryota</taxon>
        <taxon>Fungi</taxon>
        <taxon>Dikarya</taxon>
        <taxon>Ascomycota</taxon>
        <taxon>Saccharomycotina</taxon>
        <taxon>Saccharomycetes</taxon>
        <taxon>Saccharomycetales</taxon>
        <taxon>Saccharomycetaceae</taxon>
        <taxon>Saccharomyces</taxon>
    </lineage>
</organism>
<comment type="miscellaneous">
    <text evidence="1">Present with 4240 molecules/cell in log phase SD medium.</text>
</comment>
<reference key="1">
    <citation type="journal article" date="1991" name="Yeast">
        <title>The MAT locus revisited within a 9.8 kb fragment of chromosome III containing BUD5 and two new open reading frames.</title>
        <authorList>
            <person name="Jacquet M."/>
            <person name="Buhler J.-M."/>
            <person name="Iborra F."/>
            <person name="Francingues-Gaillard M.-C."/>
            <person name="Soustelle C."/>
        </authorList>
    </citation>
    <scope>NUCLEOTIDE SEQUENCE [GENOMIC DNA]</scope>
</reference>
<reference key="2">
    <citation type="journal article" date="1992" name="Nature">
        <title>The complete DNA sequence of yeast chromosome III.</title>
        <authorList>
            <person name="Oliver S.G."/>
            <person name="van der Aart Q.J.M."/>
            <person name="Agostoni-Carbone M.L."/>
            <person name="Aigle M."/>
            <person name="Alberghina L."/>
            <person name="Alexandraki D."/>
            <person name="Antoine G."/>
            <person name="Anwar R."/>
            <person name="Ballesta J.P.G."/>
            <person name="Benit P."/>
            <person name="Berben G."/>
            <person name="Bergantino E."/>
            <person name="Biteau N."/>
            <person name="Bolle P.-A."/>
            <person name="Bolotin-Fukuhara M."/>
            <person name="Brown A."/>
            <person name="Brown A.J.P."/>
            <person name="Buhler J.-M."/>
            <person name="Carcano C."/>
            <person name="Carignani G."/>
            <person name="Cederberg H."/>
            <person name="Chanet R."/>
            <person name="Contreras R."/>
            <person name="Crouzet M."/>
            <person name="Daignan-Fornier B."/>
            <person name="Defoor E."/>
            <person name="Delgado M.D."/>
            <person name="Demolder J."/>
            <person name="Doira C."/>
            <person name="Dubois E."/>
            <person name="Dujon B."/>
            <person name="Duesterhoeft A."/>
            <person name="Erdmann D."/>
            <person name="Esteban M."/>
            <person name="Fabre F."/>
            <person name="Fairhead C."/>
            <person name="Faye G."/>
            <person name="Feldmann H."/>
            <person name="Fiers W."/>
            <person name="Francingues-Gaillard M.-C."/>
            <person name="Franco L."/>
            <person name="Frontali L."/>
            <person name="Fukuhara H."/>
            <person name="Fuller L.J."/>
            <person name="Galland P."/>
            <person name="Gent M.E."/>
            <person name="Gigot D."/>
            <person name="Gilliquet V."/>
            <person name="Glansdorff N."/>
            <person name="Goffeau A."/>
            <person name="Grenson M."/>
            <person name="Grisanti P."/>
            <person name="Grivell L.A."/>
            <person name="de Haan M."/>
            <person name="Haasemann M."/>
            <person name="Hatat D."/>
            <person name="Hoenicka J."/>
            <person name="Hegemann J.H."/>
            <person name="Herbert C.J."/>
            <person name="Hilger F."/>
            <person name="Hohmann S."/>
            <person name="Hollenberg C.P."/>
            <person name="Huse K."/>
            <person name="Iborra F."/>
            <person name="Indge K.J."/>
            <person name="Isono K."/>
            <person name="Jacq C."/>
            <person name="Jacquet M."/>
            <person name="James C.M."/>
            <person name="Jauniaux J.-C."/>
            <person name="Jia Y."/>
            <person name="Jimenez A."/>
            <person name="Kelly A."/>
            <person name="Kleinhans U."/>
            <person name="Kreisl P."/>
            <person name="Lanfranchi G."/>
            <person name="Lewis C."/>
            <person name="van der Linden C.G."/>
            <person name="Lucchini G."/>
            <person name="Lutzenkirchen K."/>
            <person name="Maat M.J."/>
            <person name="Mallet L."/>
            <person name="Mannhaupt G."/>
            <person name="Martegani E."/>
            <person name="Mathieu A."/>
            <person name="Maurer C.T.C."/>
            <person name="McConnell D."/>
            <person name="McKee R.A."/>
            <person name="Messenguy F."/>
            <person name="Mewes H.-W."/>
            <person name="Molemans F."/>
            <person name="Montague M.A."/>
            <person name="Muzi Falconi M."/>
            <person name="Navas L."/>
            <person name="Newlon C.S."/>
            <person name="Noone D."/>
            <person name="Pallier C."/>
            <person name="Panzeri L."/>
            <person name="Pearson B.M."/>
            <person name="Perea J."/>
            <person name="Philippsen P."/>
            <person name="Pierard A."/>
            <person name="Planta R.J."/>
            <person name="Plevani P."/>
            <person name="Poetsch B."/>
            <person name="Pohl F.M."/>
            <person name="Purnelle B."/>
            <person name="Ramezani Rad M."/>
            <person name="Rasmussen S.W."/>
            <person name="Raynal A."/>
            <person name="Remacha M.A."/>
            <person name="Richterich P."/>
            <person name="Roberts A.B."/>
            <person name="Rodriguez F."/>
            <person name="Sanz E."/>
            <person name="Schaaff-Gerstenschlaeger I."/>
            <person name="Scherens B."/>
            <person name="Schweitzer B."/>
            <person name="Shu Y."/>
            <person name="Skala J."/>
            <person name="Slonimski P.P."/>
            <person name="Sor F."/>
            <person name="Soustelle C."/>
            <person name="Spiegelberg R."/>
            <person name="Stateva L.I."/>
            <person name="Steensma H.Y."/>
            <person name="Steiner S."/>
            <person name="Thierry A."/>
            <person name="Thireos G."/>
            <person name="Tzermia M."/>
            <person name="Urrestarazu L.A."/>
            <person name="Valle G."/>
            <person name="Vetter I."/>
            <person name="van Vliet-Reedijk J.C."/>
            <person name="Voet M."/>
            <person name="Volckaert G."/>
            <person name="Vreken P."/>
            <person name="Wang H."/>
            <person name="Warmington J.R."/>
            <person name="von Wettstein D."/>
            <person name="Wicksteed B.L."/>
            <person name="Wilson C."/>
            <person name="Wurst H."/>
            <person name="Xu G."/>
            <person name="Yoshikawa A."/>
            <person name="Zimmermann F.K."/>
            <person name="Sgouros J.G."/>
        </authorList>
    </citation>
    <scope>NUCLEOTIDE SEQUENCE [LARGE SCALE GENOMIC DNA]</scope>
    <source>
        <strain>ATCC 204508 / S288c</strain>
    </source>
</reference>
<reference key="3">
    <citation type="journal article" date="2014" name="G3 (Bethesda)">
        <title>The reference genome sequence of Saccharomyces cerevisiae: Then and now.</title>
        <authorList>
            <person name="Engel S.R."/>
            <person name="Dietrich F.S."/>
            <person name="Fisk D.G."/>
            <person name="Binkley G."/>
            <person name="Balakrishnan R."/>
            <person name="Costanzo M.C."/>
            <person name="Dwight S.S."/>
            <person name="Hitz B.C."/>
            <person name="Karra K."/>
            <person name="Nash R.S."/>
            <person name="Weng S."/>
            <person name="Wong E.D."/>
            <person name="Lloyd P."/>
            <person name="Skrzypek M.S."/>
            <person name="Miyasato S.R."/>
            <person name="Simison M."/>
            <person name="Cherry J.M."/>
        </authorList>
    </citation>
    <scope>GENOME REANNOTATION</scope>
    <source>
        <strain>ATCC 204508 / S288c</strain>
    </source>
</reference>
<reference key="4">
    <citation type="journal article" date="2007" name="Genome Res.">
        <title>Approaching a complete repository of sequence-verified protein-encoding clones for Saccharomyces cerevisiae.</title>
        <authorList>
            <person name="Hu Y."/>
            <person name="Rolfs A."/>
            <person name="Bhullar B."/>
            <person name="Murthy T.V.S."/>
            <person name="Zhu C."/>
            <person name="Berger M.F."/>
            <person name="Camargo A.A."/>
            <person name="Kelley F."/>
            <person name="McCarron S."/>
            <person name="Jepson D."/>
            <person name="Richardson A."/>
            <person name="Raphael J."/>
            <person name="Moreira D."/>
            <person name="Taycher E."/>
            <person name="Zuo D."/>
            <person name="Mohr S."/>
            <person name="Kane M.F."/>
            <person name="Williamson J."/>
            <person name="Simpson A.J.G."/>
            <person name="Bulyk M.L."/>
            <person name="Harlow E."/>
            <person name="Marsischky G."/>
            <person name="Kolodner R.D."/>
            <person name="LaBaer J."/>
        </authorList>
    </citation>
    <scope>NUCLEOTIDE SEQUENCE [GENOMIC DNA]</scope>
    <source>
        <strain>ATCC 204508 / S288c</strain>
    </source>
</reference>
<reference key="5">
    <citation type="journal article" date="2003" name="Nature">
        <title>Global analysis of protein expression in yeast.</title>
        <authorList>
            <person name="Ghaemmaghami S."/>
            <person name="Huh W.-K."/>
            <person name="Bower K."/>
            <person name="Howson R.W."/>
            <person name="Belle A."/>
            <person name="Dephoure N."/>
            <person name="O'Shea E.K."/>
            <person name="Weissman J.S."/>
        </authorList>
    </citation>
    <scope>LEVEL OF PROTEIN EXPRESSION [LARGE SCALE ANALYSIS]</scope>
</reference>
<reference key="6">
    <citation type="journal article" date="2012" name="Proc. Natl. Acad. Sci. U.S.A.">
        <title>N-terminal acetylome analyses and functional insights of the N-terminal acetyltransferase NatB.</title>
        <authorList>
            <person name="Van Damme P."/>
            <person name="Lasa M."/>
            <person name="Polevoda B."/>
            <person name="Gazquez C."/>
            <person name="Elosegui-Artola A."/>
            <person name="Kim D.S."/>
            <person name="De Juan-Pardo E."/>
            <person name="Demeyer K."/>
            <person name="Hole K."/>
            <person name="Larrea E."/>
            <person name="Timmerman E."/>
            <person name="Prieto J."/>
            <person name="Arnesen T."/>
            <person name="Sherman F."/>
            <person name="Gevaert K."/>
            <person name="Aldabe R."/>
        </authorList>
    </citation>
    <scope>IDENTIFICATION BY MASS SPECTROMETRY [LARGE SCALE ANALYSIS]</scope>
</reference>
<protein>
    <recommendedName>
        <fullName>Uncharacterized protein YCR043C</fullName>
    </recommendedName>
</protein>
<sequence>MIPAPLDASLLREHAFQGTNDLSTVLSPSTFTDEGGYKPVLKYGLGYFNYGLVIDDEVYDYSVCDIIRGHVYDHFWCYFCCFMILFTIWLISLNWCPSSKKSKFDWSKKKDDFKMEGGDLEYQHVKI</sequence>
<dbReference type="EMBL" id="X63853">
    <property type="protein sequence ID" value="CAA45338.1"/>
    <property type="molecule type" value="Genomic_DNA"/>
</dbReference>
<dbReference type="EMBL" id="X59720">
    <property type="protein sequence ID" value="CAA42291.1"/>
    <property type="molecule type" value="Genomic_DNA"/>
</dbReference>
<dbReference type="EMBL" id="AY558527">
    <property type="protein sequence ID" value="AAS56853.1"/>
    <property type="molecule type" value="Genomic_DNA"/>
</dbReference>
<dbReference type="EMBL" id="BK006937">
    <property type="protein sequence ID" value="DAA07521.1"/>
    <property type="molecule type" value="Genomic_DNA"/>
</dbReference>
<dbReference type="PIR" id="S26491">
    <property type="entry name" value="S26491"/>
</dbReference>
<dbReference type="RefSeq" id="NP_009972.1">
    <property type="nucleotide sequence ID" value="NM_001178757.1"/>
</dbReference>
<dbReference type="BioGRID" id="31025">
    <property type="interactions" value="65"/>
</dbReference>
<dbReference type="FunCoup" id="P25361">
    <property type="interactions" value="59"/>
</dbReference>
<dbReference type="IntAct" id="P25361">
    <property type="interactions" value="31"/>
</dbReference>
<dbReference type="MINT" id="P25361"/>
<dbReference type="STRING" id="4932.YCR043C"/>
<dbReference type="iPTMnet" id="P25361"/>
<dbReference type="PaxDb" id="4932-YCR043C"/>
<dbReference type="PeptideAtlas" id="P25361"/>
<dbReference type="EnsemblFungi" id="YCR043C_mRNA">
    <property type="protein sequence ID" value="YCR043C"/>
    <property type="gene ID" value="YCR043C"/>
</dbReference>
<dbReference type="GeneID" id="850410"/>
<dbReference type="KEGG" id="sce:YCR043C"/>
<dbReference type="AGR" id="SGD:S000000639"/>
<dbReference type="SGD" id="S000000639">
    <property type="gene designation" value="YCR043C"/>
</dbReference>
<dbReference type="VEuPathDB" id="FungiDB:YCR043C"/>
<dbReference type="eggNOG" id="ENOG502S7G5">
    <property type="taxonomic scope" value="Eukaryota"/>
</dbReference>
<dbReference type="HOGENOM" id="CLU_2005713_0_0_1"/>
<dbReference type="InParanoid" id="P25361"/>
<dbReference type="OMA" id="LIHEHAY"/>
<dbReference type="OrthoDB" id="4067115at2759"/>
<dbReference type="BioCyc" id="YEAST:G3O-29354-MONOMER"/>
<dbReference type="BioGRID-ORCS" id="850410">
    <property type="hits" value="3 hits in 10 CRISPR screens"/>
</dbReference>
<dbReference type="PRO" id="PR:P25361"/>
<dbReference type="Proteomes" id="UP000002311">
    <property type="component" value="Chromosome III"/>
</dbReference>
<dbReference type="RNAct" id="P25361">
    <property type="molecule type" value="protein"/>
</dbReference>
<dbReference type="GO" id="GO:0005829">
    <property type="term" value="C:cytosol"/>
    <property type="evidence" value="ECO:0007005"/>
    <property type="project" value="SGD"/>
</dbReference>
<dbReference type="GO" id="GO:0005794">
    <property type="term" value="C:Golgi apparatus"/>
    <property type="evidence" value="ECO:0007005"/>
    <property type="project" value="SGD"/>
</dbReference>
<dbReference type="GO" id="GO:0043332">
    <property type="term" value="C:mating projection tip"/>
    <property type="evidence" value="ECO:0007005"/>
    <property type="project" value="SGD"/>
</dbReference>
<feature type="chain" id="PRO_0000202568" description="Uncharacterized protein YCR043C">
    <location>
        <begin position="1"/>
        <end position="127"/>
    </location>
</feature>